<evidence type="ECO:0000255" key="1">
    <source>
        <dbReference type="HAMAP-Rule" id="MF_00203"/>
    </source>
</evidence>
<gene>
    <name evidence="1" type="primary">uvrC</name>
    <name type="ordered locus">LEPBI_I2076</name>
</gene>
<keyword id="KW-0963">Cytoplasm</keyword>
<keyword id="KW-0227">DNA damage</keyword>
<keyword id="KW-0228">DNA excision</keyword>
<keyword id="KW-0234">DNA repair</keyword>
<keyword id="KW-0267">Excision nuclease</keyword>
<keyword id="KW-1185">Reference proteome</keyword>
<keyword id="KW-0742">SOS response</keyword>
<sequence>MKDSLVLKTIQEKIKNLGSLPGCYLWKNELGQVIYVGKALKLQSRVRSYLNPNQKDRKTRALFVELYDLDWIATGTEKEALLLEATLIKKYNPKFNVRLKDDKKYPFLCVSTSEDYPMVFLTRKVKDNGDRYFGPFTDVKAARDTLELIHRIFPIRKTKLKLPLPKPQRPCLNFHMGRCLGPCQGNVTKDTYSELVDEILRFLEGKKERLVADLKKAMMDASSKMEYERAGFLKQRIEKINQLREKQTVVSMDGGDEDILGISKREDEGQILILEVRGGRLEGKKSFPLTGLSFSDDEEAFTSFLRDYYLNVTVLPSVVYLPTSAKGNYDVFLEAILEKFGTSIKLKFPEMGPKKSLLRLAEKNADLSLTERILATKLRDQTVAMKELQEKLNLPTLPRTIECYDISHFQGSLPVASGVMFVEGKPYKPGYRHYKMRGYEGINDPGMIHEVIARRLSHLVNEEEPLPDLIVIDGGLTQLSRAAEAANALDLGHIPMVGLAKKREEIYFPGEKHPYSFDQHSPMMRLLRNLRDEAHRFGVTFQRLQRKKKALKSILDDIPDIGASRRKSILMYFQAKKKVTDATRQELEKVQGIGPVLAEKIFTNIQNLKKIEPK</sequence>
<organism>
    <name type="scientific">Leptospira biflexa serovar Patoc (strain Patoc 1 / ATCC 23582 / Paris)</name>
    <dbReference type="NCBI Taxonomy" id="456481"/>
    <lineage>
        <taxon>Bacteria</taxon>
        <taxon>Pseudomonadati</taxon>
        <taxon>Spirochaetota</taxon>
        <taxon>Spirochaetia</taxon>
        <taxon>Leptospirales</taxon>
        <taxon>Leptospiraceae</taxon>
        <taxon>Leptospira</taxon>
    </lineage>
</organism>
<protein>
    <recommendedName>
        <fullName evidence="1">UvrABC system protein C</fullName>
        <shortName evidence="1">Protein UvrC</shortName>
    </recommendedName>
    <alternativeName>
        <fullName evidence="1">Excinuclease ABC subunit C</fullName>
    </alternativeName>
</protein>
<comment type="function">
    <text evidence="1">The UvrABC repair system catalyzes the recognition and processing of DNA lesions. UvrC both incises the 5' and 3' sides of the lesion. The N-terminal half is responsible for the 3' incision and the C-terminal half is responsible for the 5' incision.</text>
</comment>
<comment type="subunit">
    <text evidence="1">Interacts with UvrB in an incision complex.</text>
</comment>
<comment type="subcellular location">
    <subcellularLocation>
        <location evidence="1">Cytoplasm</location>
    </subcellularLocation>
</comment>
<comment type="similarity">
    <text evidence="1">Belongs to the UvrC family.</text>
</comment>
<reference key="1">
    <citation type="journal article" date="2008" name="PLoS ONE">
        <title>Genome sequence of the saprophyte Leptospira biflexa provides insights into the evolution of Leptospira and the pathogenesis of leptospirosis.</title>
        <authorList>
            <person name="Picardeau M."/>
            <person name="Bulach D.M."/>
            <person name="Bouchier C."/>
            <person name="Zuerner R.L."/>
            <person name="Zidane N."/>
            <person name="Wilson P.J."/>
            <person name="Creno S."/>
            <person name="Kuczek E.S."/>
            <person name="Bommezzadri S."/>
            <person name="Davis J.C."/>
            <person name="McGrath A."/>
            <person name="Johnson M.J."/>
            <person name="Boursaux-Eude C."/>
            <person name="Seemann T."/>
            <person name="Rouy Z."/>
            <person name="Coppel R.L."/>
            <person name="Rood J.I."/>
            <person name="Lajus A."/>
            <person name="Davies J.K."/>
            <person name="Medigue C."/>
            <person name="Adler B."/>
        </authorList>
    </citation>
    <scope>NUCLEOTIDE SEQUENCE [LARGE SCALE GENOMIC DNA]</scope>
    <source>
        <strain>Patoc 1 / ATCC 23582 / Paris</strain>
    </source>
</reference>
<proteinExistence type="inferred from homology"/>
<dbReference type="EMBL" id="CP000786">
    <property type="protein sequence ID" value="ABZ98178.1"/>
    <property type="molecule type" value="Genomic_DNA"/>
</dbReference>
<dbReference type="RefSeq" id="WP_012389048.1">
    <property type="nucleotide sequence ID" value="NC_010602.1"/>
</dbReference>
<dbReference type="SMR" id="B0SST8"/>
<dbReference type="STRING" id="456481.LEPBI_I2076"/>
<dbReference type="KEGG" id="lbi:LEPBI_I2076"/>
<dbReference type="HOGENOM" id="CLU_014841_3_2_12"/>
<dbReference type="OrthoDB" id="9804933at2"/>
<dbReference type="BioCyc" id="LBIF456481:LEPBI_RS10255-MONOMER"/>
<dbReference type="Proteomes" id="UP000001847">
    <property type="component" value="Chromosome I"/>
</dbReference>
<dbReference type="GO" id="GO:0005737">
    <property type="term" value="C:cytoplasm"/>
    <property type="evidence" value="ECO:0007669"/>
    <property type="project" value="UniProtKB-SubCell"/>
</dbReference>
<dbReference type="GO" id="GO:0009380">
    <property type="term" value="C:excinuclease repair complex"/>
    <property type="evidence" value="ECO:0007669"/>
    <property type="project" value="InterPro"/>
</dbReference>
<dbReference type="GO" id="GO:0003677">
    <property type="term" value="F:DNA binding"/>
    <property type="evidence" value="ECO:0007669"/>
    <property type="project" value="UniProtKB-UniRule"/>
</dbReference>
<dbReference type="GO" id="GO:0009381">
    <property type="term" value="F:excinuclease ABC activity"/>
    <property type="evidence" value="ECO:0007669"/>
    <property type="project" value="UniProtKB-UniRule"/>
</dbReference>
<dbReference type="GO" id="GO:0006289">
    <property type="term" value="P:nucleotide-excision repair"/>
    <property type="evidence" value="ECO:0007669"/>
    <property type="project" value="UniProtKB-UniRule"/>
</dbReference>
<dbReference type="GO" id="GO:0009432">
    <property type="term" value="P:SOS response"/>
    <property type="evidence" value="ECO:0007669"/>
    <property type="project" value="UniProtKB-UniRule"/>
</dbReference>
<dbReference type="CDD" id="cd10434">
    <property type="entry name" value="GIY-YIG_UvrC_Cho"/>
    <property type="match status" value="1"/>
</dbReference>
<dbReference type="FunFam" id="3.40.1440.10:FF:000001">
    <property type="entry name" value="UvrABC system protein C"/>
    <property type="match status" value="1"/>
</dbReference>
<dbReference type="Gene3D" id="1.10.150.20">
    <property type="entry name" value="5' to 3' exonuclease, C-terminal subdomain"/>
    <property type="match status" value="1"/>
</dbReference>
<dbReference type="Gene3D" id="3.40.1440.10">
    <property type="entry name" value="GIY-YIG endonuclease"/>
    <property type="match status" value="1"/>
</dbReference>
<dbReference type="Gene3D" id="3.30.420.340">
    <property type="entry name" value="UvrC, RNAse H endonuclease domain"/>
    <property type="match status" value="1"/>
</dbReference>
<dbReference type="HAMAP" id="MF_00203">
    <property type="entry name" value="UvrC"/>
    <property type="match status" value="1"/>
</dbReference>
<dbReference type="InterPro" id="IPR000305">
    <property type="entry name" value="GIY-YIG_endonuc"/>
</dbReference>
<dbReference type="InterPro" id="IPR035901">
    <property type="entry name" value="GIY-YIG_endonuc_sf"/>
</dbReference>
<dbReference type="InterPro" id="IPR047296">
    <property type="entry name" value="GIY-YIG_UvrC_Cho"/>
</dbReference>
<dbReference type="InterPro" id="IPR003583">
    <property type="entry name" value="Hlx-hairpin-Hlx_DNA-bd_motif"/>
</dbReference>
<dbReference type="InterPro" id="IPR010994">
    <property type="entry name" value="RuvA_2-like"/>
</dbReference>
<dbReference type="InterPro" id="IPR001943">
    <property type="entry name" value="UVR_dom"/>
</dbReference>
<dbReference type="InterPro" id="IPR036876">
    <property type="entry name" value="UVR_dom_sf"/>
</dbReference>
<dbReference type="InterPro" id="IPR050066">
    <property type="entry name" value="UvrABC_protein_C"/>
</dbReference>
<dbReference type="InterPro" id="IPR004791">
    <property type="entry name" value="UvrC"/>
</dbReference>
<dbReference type="InterPro" id="IPR001162">
    <property type="entry name" value="UvrC_RNase_H_dom"/>
</dbReference>
<dbReference type="InterPro" id="IPR038476">
    <property type="entry name" value="UvrC_RNase_H_dom_sf"/>
</dbReference>
<dbReference type="NCBIfam" id="NF001824">
    <property type="entry name" value="PRK00558.1-5"/>
    <property type="match status" value="1"/>
</dbReference>
<dbReference type="NCBIfam" id="TIGR00194">
    <property type="entry name" value="uvrC"/>
    <property type="match status" value="1"/>
</dbReference>
<dbReference type="PANTHER" id="PTHR30562:SF1">
    <property type="entry name" value="UVRABC SYSTEM PROTEIN C"/>
    <property type="match status" value="1"/>
</dbReference>
<dbReference type="PANTHER" id="PTHR30562">
    <property type="entry name" value="UVRC/OXIDOREDUCTASE"/>
    <property type="match status" value="1"/>
</dbReference>
<dbReference type="Pfam" id="PF01541">
    <property type="entry name" value="GIY-YIG"/>
    <property type="match status" value="1"/>
</dbReference>
<dbReference type="Pfam" id="PF02151">
    <property type="entry name" value="UVR"/>
    <property type="match status" value="1"/>
</dbReference>
<dbReference type="Pfam" id="PF22920">
    <property type="entry name" value="UvrC_RNaseH"/>
    <property type="match status" value="1"/>
</dbReference>
<dbReference type="Pfam" id="PF08459">
    <property type="entry name" value="UvrC_RNaseH_dom"/>
    <property type="match status" value="1"/>
</dbReference>
<dbReference type="SMART" id="SM00465">
    <property type="entry name" value="GIYc"/>
    <property type="match status" value="1"/>
</dbReference>
<dbReference type="SMART" id="SM00278">
    <property type="entry name" value="HhH1"/>
    <property type="match status" value="2"/>
</dbReference>
<dbReference type="SUPFAM" id="SSF46600">
    <property type="entry name" value="C-terminal UvrC-binding domain of UvrB"/>
    <property type="match status" value="1"/>
</dbReference>
<dbReference type="SUPFAM" id="SSF82771">
    <property type="entry name" value="GIY-YIG endonuclease"/>
    <property type="match status" value="1"/>
</dbReference>
<dbReference type="SUPFAM" id="SSF47781">
    <property type="entry name" value="RuvA domain 2-like"/>
    <property type="match status" value="1"/>
</dbReference>
<dbReference type="PROSITE" id="PS50164">
    <property type="entry name" value="GIY_YIG"/>
    <property type="match status" value="1"/>
</dbReference>
<dbReference type="PROSITE" id="PS50151">
    <property type="entry name" value="UVR"/>
    <property type="match status" value="1"/>
</dbReference>
<dbReference type="PROSITE" id="PS50165">
    <property type="entry name" value="UVRC"/>
    <property type="match status" value="1"/>
</dbReference>
<accession>B0SST8</accession>
<name>UVRC_LEPBP</name>
<feature type="chain" id="PRO_1000099499" description="UvrABC system protein C">
    <location>
        <begin position="1"/>
        <end position="614"/>
    </location>
</feature>
<feature type="domain" description="GIY-YIG" evidence="1">
    <location>
        <begin position="19"/>
        <end position="97"/>
    </location>
</feature>
<feature type="domain" description="UVR" evidence="1">
    <location>
        <begin position="208"/>
        <end position="243"/>
    </location>
</feature>